<protein>
    <recommendedName>
        <fullName evidence="1">Membrane protein insertase YidC</fullName>
    </recommendedName>
    <alternativeName>
        <fullName evidence="1">Foldase YidC</fullName>
    </alternativeName>
    <alternativeName>
        <fullName evidence="1">Membrane integrase YidC</fullName>
    </alternativeName>
    <alternativeName>
        <fullName evidence="1">Membrane protein YidC</fullName>
    </alternativeName>
</protein>
<sequence>MDSQRNLLVIALLFVSFMIWQAWEQDKNPQPQAQQTTQTTTTAAGSAADQGVPASGQGKLISVKTDVLDLTINTRGGDVEQALLPAYPKELNSTQPFQLLETSPQFIYQAQSGLTGRDGPDNPANGPRPLYNVEKDAYVLAEGQNELQVPMTYTDAAGNTFTKTFVLKRGDYAVNVNYNVQNAGEKPLEISTFGQLKQSITLPPHLDTGSSNFALHTFRGAAYSTPDEKYEKYKFDTIADNENLNISSKGGWVAMLQQYFATAWIPHNDGTNNFYTANLGNGIAAIGYKSQPVLVQPGQTGAMNSTLWVGPEIQDKMAAVAPHLDLTVDYGWLWFISQPLFKLLKWIHSFVGNWGFSIIIITFIVRGIMYPLTKAQYTSMAKMRMLQPKIQAMRERLGDDKQRISQEMMALYKAEKVNPLGGCFPLLIQMPIFLALYYMLMGSVELRQAPFALWIHDLSAQDPYYILPILMGVTMFFIQKMSPTTVTDPMQQKIMTFMPVIFTVFFLWFPSGLVLYYIVSNLVTIIQQQLIYRGLEKRGLHSREKKKS</sequence>
<organism>
    <name type="scientific">Escherichia coli O1:K1 / APEC</name>
    <dbReference type="NCBI Taxonomy" id="405955"/>
    <lineage>
        <taxon>Bacteria</taxon>
        <taxon>Pseudomonadati</taxon>
        <taxon>Pseudomonadota</taxon>
        <taxon>Gammaproteobacteria</taxon>
        <taxon>Enterobacterales</taxon>
        <taxon>Enterobacteriaceae</taxon>
        <taxon>Escherichia</taxon>
    </lineage>
</organism>
<keyword id="KW-0997">Cell inner membrane</keyword>
<keyword id="KW-1003">Cell membrane</keyword>
<keyword id="KW-0143">Chaperone</keyword>
<keyword id="KW-0472">Membrane</keyword>
<keyword id="KW-0653">Protein transport</keyword>
<keyword id="KW-1185">Reference proteome</keyword>
<keyword id="KW-0812">Transmembrane</keyword>
<keyword id="KW-1133">Transmembrane helix</keyword>
<keyword id="KW-0813">Transport</keyword>
<dbReference type="EMBL" id="CP000468">
    <property type="protein sequence ID" value="ABJ03179.1"/>
    <property type="molecule type" value="Genomic_DNA"/>
</dbReference>
<dbReference type="RefSeq" id="WP_000378258.1">
    <property type="nucleotide sequence ID" value="NZ_CADILS010000011.1"/>
</dbReference>
<dbReference type="SMR" id="A1AHN9"/>
<dbReference type="GeneID" id="93778448"/>
<dbReference type="KEGG" id="ecv:APECO1_2754"/>
<dbReference type="HOGENOM" id="CLU_016535_3_0_6"/>
<dbReference type="Proteomes" id="UP000008216">
    <property type="component" value="Chromosome"/>
</dbReference>
<dbReference type="GO" id="GO:0005886">
    <property type="term" value="C:plasma membrane"/>
    <property type="evidence" value="ECO:0007669"/>
    <property type="project" value="UniProtKB-SubCell"/>
</dbReference>
<dbReference type="GO" id="GO:0032977">
    <property type="term" value="F:membrane insertase activity"/>
    <property type="evidence" value="ECO:0007669"/>
    <property type="project" value="InterPro"/>
</dbReference>
<dbReference type="GO" id="GO:0051205">
    <property type="term" value="P:protein insertion into membrane"/>
    <property type="evidence" value="ECO:0007669"/>
    <property type="project" value="TreeGrafter"/>
</dbReference>
<dbReference type="GO" id="GO:0015031">
    <property type="term" value="P:protein transport"/>
    <property type="evidence" value="ECO:0007669"/>
    <property type="project" value="UniProtKB-KW"/>
</dbReference>
<dbReference type="CDD" id="cd20070">
    <property type="entry name" value="5TM_YidC_Alb3"/>
    <property type="match status" value="1"/>
</dbReference>
<dbReference type="CDD" id="cd19961">
    <property type="entry name" value="EcYidC-like_peri"/>
    <property type="match status" value="1"/>
</dbReference>
<dbReference type="FunFam" id="2.70.98.90:FF:000001">
    <property type="entry name" value="Membrane protein insertase YidC"/>
    <property type="match status" value="1"/>
</dbReference>
<dbReference type="Gene3D" id="2.70.98.90">
    <property type="match status" value="1"/>
</dbReference>
<dbReference type="HAMAP" id="MF_01810">
    <property type="entry name" value="YidC_type1"/>
    <property type="match status" value="1"/>
</dbReference>
<dbReference type="InterPro" id="IPR019998">
    <property type="entry name" value="Membr_insert_YidC"/>
</dbReference>
<dbReference type="InterPro" id="IPR028053">
    <property type="entry name" value="Membr_insert_YidC_N"/>
</dbReference>
<dbReference type="InterPro" id="IPR001708">
    <property type="entry name" value="YidC/ALB3/OXA1/COX18"/>
</dbReference>
<dbReference type="InterPro" id="IPR028055">
    <property type="entry name" value="YidC/Oxa/ALB_C"/>
</dbReference>
<dbReference type="InterPro" id="IPR047196">
    <property type="entry name" value="YidC_ALB_C"/>
</dbReference>
<dbReference type="InterPro" id="IPR038221">
    <property type="entry name" value="YidC_periplasmic_sf"/>
</dbReference>
<dbReference type="NCBIfam" id="NF002351">
    <property type="entry name" value="PRK01318.1-1"/>
    <property type="match status" value="1"/>
</dbReference>
<dbReference type="NCBIfam" id="NF002352">
    <property type="entry name" value="PRK01318.1-3"/>
    <property type="match status" value="1"/>
</dbReference>
<dbReference type="NCBIfam" id="NF002353">
    <property type="entry name" value="PRK01318.1-4"/>
    <property type="match status" value="1"/>
</dbReference>
<dbReference type="NCBIfam" id="TIGR03593">
    <property type="entry name" value="yidC_nterm"/>
    <property type="match status" value="1"/>
</dbReference>
<dbReference type="NCBIfam" id="TIGR03592">
    <property type="entry name" value="yidC_oxa1_cterm"/>
    <property type="match status" value="1"/>
</dbReference>
<dbReference type="PANTHER" id="PTHR12428:SF65">
    <property type="entry name" value="CYTOCHROME C OXIDASE ASSEMBLY PROTEIN COX18, MITOCHONDRIAL"/>
    <property type="match status" value="1"/>
</dbReference>
<dbReference type="PANTHER" id="PTHR12428">
    <property type="entry name" value="OXA1"/>
    <property type="match status" value="1"/>
</dbReference>
<dbReference type="Pfam" id="PF02096">
    <property type="entry name" value="60KD_IMP"/>
    <property type="match status" value="1"/>
</dbReference>
<dbReference type="Pfam" id="PF14849">
    <property type="entry name" value="YidC_periplas"/>
    <property type="match status" value="1"/>
</dbReference>
<dbReference type="PRINTS" id="PR00701">
    <property type="entry name" value="60KDINNERMP"/>
</dbReference>
<dbReference type="PRINTS" id="PR01900">
    <property type="entry name" value="YIDCPROTEIN"/>
</dbReference>
<proteinExistence type="inferred from homology"/>
<feature type="chain" id="PRO_1000070087" description="Membrane protein insertase YidC">
    <location>
        <begin position="1"/>
        <end position="548"/>
    </location>
</feature>
<feature type="transmembrane region" description="Helical" evidence="1">
    <location>
        <begin position="6"/>
        <end position="26"/>
    </location>
</feature>
<feature type="transmembrane region" description="Helical" evidence="1">
    <location>
        <begin position="350"/>
        <end position="370"/>
    </location>
</feature>
<feature type="transmembrane region" description="Helical" evidence="1">
    <location>
        <begin position="420"/>
        <end position="440"/>
    </location>
</feature>
<feature type="transmembrane region" description="Helical" evidence="1">
    <location>
        <begin position="458"/>
        <end position="478"/>
    </location>
</feature>
<feature type="transmembrane region" description="Helical" evidence="1">
    <location>
        <begin position="499"/>
        <end position="519"/>
    </location>
</feature>
<feature type="region of interest" description="Disordered" evidence="2">
    <location>
        <begin position="28"/>
        <end position="55"/>
    </location>
</feature>
<feature type="compositionally biased region" description="Low complexity" evidence="2">
    <location>
        <begin position="30"/>
        <end position="50"/>
    </location>
</feature>
<accession>A1AHN9</accession>
<reference key="1">
    <citation type="journal article" date="2007" name="J. Bacteriol.">
        <title>The genome sequence of avian pathogenic Escherichia coli strain O1:K1:H7 shares strong similarities with human extraintestinal pathogenic E. coli genomes.</title>
        <authorList>
            <person name="Johnson T.J."/>
            <person name="Kariyawasam S."/>
            <person name="Wannemuehler Y."/>
            <person name="Mangiamele P."/>
            <person name="Johnson S.J."/>
            <person name="Doetkott C."/>
            <person name="Skyberg J.A."/>
            <person name="Lynne A.M."/>
            <person name="Johnson J.R."/>
            <person name="Nolan L.K."/>
        </authorList>
    </citation>
    <scope>NUCLEOTIDE SEQUENCE [LARGE SCALE GENOMIC DNA]</scope>
</reference>
<gene>
    <name evidence="1" type="primary">yidC</name>
    <name type="ordered locus">Ecok1_36850</name>
    <name type="ORF">APECO1_2754</name>
</gene>
<evidence type="ECO:0000255" key="1">
    <source>
        <dbReference type="HAMAP-Rule" id="MF_01810"/>
    </source>
</evidence>
<evidence type="ECO:0000256" key="2">
    <source>
        <dbReference type="SAM" id="MobiDB-lite"/>
    </source>
</evidence>
<comment type="function">
    <text evidence="1">Required for the insertion and/or proper folding and/or complex formation of integral membrane proteins into the membrane. Involved in integration of membrane proteins that insert both dependently and independently of the Sec translocase complex, as well as at least some lipoproteins. Aids folding of multispanning membrane proteins.</text>
</comment>
<comment type="subunit">
    <text evidence="1">Interacts with the Sec translocase complex via SecD. Specifically interacts with transmembrane segments of nascent integral membrane proteins during membrane integration.</text>
</comment>
<comment type="subcellular location">
    <subcellularLocation>
        <location evidence="1">Cell inner membrane</location>
        <topology evidence="1">Multi-pass membrane protein</topology>
    </subcellularLocation>
</comment>
<comment type="similarity">
    <text evidence="1">Belongs to the OXA1/ALB3/YidC family. Type 1 subfamily.</text>
</comment>
<name>YIDC_ECOK1</name>